<feature type="chain" id="PRO_0000272248" description="F-box protein SKP2B">
    <location>
        <begin position="1"/>
        <end position="360"/>
    </location>
</feature>
<feature type="domain" description="F-box">
    <location>
        <begin position="25"/>
        <end position="76"/>
    </location>
</feature>
<feature type="repeat" description="LRR 1">
    <location>
        <begin position="77"/>
        <end position="99"/>
    </location>
</feature>
<feature type="repeat" description="LRR 2">
    <location>
        <begin position="101"/>
        <end position="126"/>
    </location>
</feature>
<feature type="repeat" description="LRR 3">
    <location>
        <begin position="127"/>
        <end position="152"/>
    </location>
</feature>
<feature type="repeat" description="LRR 4">
    <location>
        <begin position="153"/>
        <end position="178"/>
    </location>
</feature>
<feature type="repeat" description="LRR 5">
    <location>
        <begin position="180"/>
        <end position="205"/>
    </location>
</feature>
<feature type="repeat" description="LRR 6">
    <location>
        <begin position="206"/>
        <end position="231"/>
    </location>
</feature>
<feature type="repeat" description="LRR 7">
    <location>
        <begin position="232"/>
        <end position="257"/>
    </location>
</feature>
<feature type="repeat" description="LRR 8">
    <location>
        <begin position="258"/>
        <end position="301"/>
    </location>
</feature>
<feature type="repeat" description="LRR 9">
    <location>
        <begin position="302"/>
        <end position="333"/>
    </location>
</feature>
<feature type="mutagenesis site" description="Binds auxin." evidence="2">
    <original>S</original>
    <variation>L</variation>
    <location>
        <position position="128"/>
    </location>
</feature>
<organism>
    <name type="scientific">Arabidopsis thaliana</name>
    <name type="common">Mouse-ear cress</name>
    <dbReference type="NCBI Taxonomy" id="3702"/>
    <lineage>
        <taxon>Eukaryota</taxon>
        <taxon>Viridiplantae</taxon>
        <taxon>Streptophyta</taxon>
        <taxon>Embryophyta</taxon>
        <taxon>Tracheophyta</taxon>
        <taxon>Spermatophyta</taxon>
        <taxon>Magnoliopsida</taxon>
        <taxon>eudicotyledons</taxon>
        <taxon>Gunneridae</taxon>
        <taxon>Pentapetalae</taxon>
        <taxon>rosids</taxon>
        <taxon>malvids</taxon>
        <taxon>Brassicales</taxon>
        <taxon>Brassicaceae</taxon>
        <taxon>Camelineae</taxon>
        <taxon>Arabidopsis</taxon>
    </lineage>
</organism>
<keyword id="KW-0433">Leucine-rich repeat</keyword>
<keyword id="KW-1185">Reference proteome</keyword>
<keyword id="KW-0677">Repeat</keyword>
<gene>
    <name type="primary">SKP2B</name>
    <name type="synonym">FBL5</name>
    <name type="ordered locus">At1g77000</name>
    <name type="ORF">F22K20.10</name>
</gene>
<comment type="function">
    <text evidence="1 2">Component of SCF(SKP2B) E3 ubiquitin ligase complexes, which mediate the ubiquitination and subsequent proteasomal degradation of the cyclin-dependent kinase inhibitor KRP1. Does not interact with auxin.</text>
</comment>
<comment type="sequence caution" evidence="3">
    <conflict type="erroneous initiation">
        <sequence resource="EMBL-CDS" id="BAC42507"/>
    </conflict>
    <text>Truncated N-terminus.</text>
</comment>
<proteinExistence type="evidence at protein level"/>
<accession>O49286</accession>
<accession>Q680E2</accession>
<accession>Q8GY48</accession>
<evidence type="ECO:0000269" key="1">
    <source>
    </source>
</evidence>
<evidence type="ECO:0000269" key="2">
    <source>
    </source>
</evidence>
<evidence type="ECO:0000305" key="3"/>
<dbReference type="EMBL" id="AC002291">
    <property type="protein sequence ID" value="AAC00619.1"/>
    <property type="molecule type" value="Genomic_DNA"/>
</dbReference>
<dbReference type="EMBL" id="CP002684">
    <property type="protein sequence ID" value="AEE35923.1"/>
    <property type="molecule type" value="Genomic_DNA"/>
</dbReference>
<dbReference type="EMBL" id="CP002684">
    <property type="protein sequence ID" value="AEE35924.1"/>
    <property type="molecule type" value="Genomic_DNA"/>
</dbReference>
<dbReference type="EMBL" id="BT024747">
    <property type="protein sequence ID" value="ABD59085.1"/>
    <property type="molecule type" value="mRNA"/>
</dbReference>
<dbReference type="EMBL" id="AY087441">
    <property type="protein sequence ID" value="AAM64987.1"/>
    <property type="molecule type" value="mRNA"/>
</dbReference>
<dbReference type="EMBL" id="AK117866">
    <property type="protein sequence ID" value="BAC42507.1"/>
    <property type="status" value="ALT_INIT"/>
    <property type="molecule type" value="mRNA"/>
</dbReference>
<dbReference type="EMBL" id="AK175607">
    <property type="protein sequence ID" value="BAD43370.1"/>
    <property type="molecule type" value="mRNA"/>
</dbReference>
<dbReference type="EMBL" id="AK175925">
    <property type="protein sequence ID" value="BAD43688.1"/>
    <property type="molecule type" value="mRNA"/>
</dbReference>
<dbReference type="PIR" id="A96799">
    <property type="entry name" value="A96799"/>
</dbReference>
<dbReference type="RefSeq" id="NP_001185415.1">
    <property type="nucleotide sequence ID" value="NM_001198486.2"/>
</dbReference>
<dbReference type="RefSeq" id="NP_565147.1">
    <property type="nucleotide sequence ID" value="NM_106351.4"/>
</dbReference>
<dbReference type="SMR" id="O49286"/>
<dbReference type="BioGRID" id="29255">
    <property type="interactions" value="5"/>
</dbReference>
<dbReference type="FunCoup" id="O49286">
    <property type="interactions" value="291"/>
</dbReference>
<dbReference type="STRING" id="3702.O49286"/>
<dbReference type="PaxDb" id="3702-AT1G77000.2"/>
<dbReference type="ProteomicsDB" id="232638"/>
<dbReference type="EnsemblPlants" id="AT1G77000.1">
    <property type="protein sequence ID" value="AT1G77000.1"/>
    <property type="gene ID" value="AT1G77000"/>
</dbReference>
<dbReference type="EnsemblPlants" id="AT1G77000.2">
    <property type="protein sequence ID" value="AT1G77000.2"/>
    <property type="gene ID" value="AT1G77000"/>
</dbReference>
<dbReference type="GeneID" id="844036"/>
<dbReference type="Gramene" id="AT1G77000.1">
    <property type="protein sequence ID" value="AT1G77000.1"/>
    <property type="gene ID" value="AT1G77000"/>
</dbReference>
<dbReference type="Gramene" id="AT1G77000.2">
    <property type="protein sequence ID" value="AT1G77000.2"/>
    <property type="gene ID" value="AT1G77000"/>
</dbReference>
<dbReference type="KEGG" id="ath:AT1G77000"/>
<dbReference type="Araport" id="AT1G77000"/>
<dbReference type="TAIR" id="AT1G77000">
    <property type="gene designation" value="SKP2B"/>
</dbReference>
<dbReference type="eggNOG" id="KOG1947">
    <property type="taxonomic scope" value="Eukaryota"/>
</dbReference>
<dbReference type="HOGENOM" id="CLU_032606_0_0_1"/>
<dbReference type="InParanoid" id="O49286"/>
<dbReference type="OMA" id="GNMITEW"/>
<dbReference type="OrthoDB" id="423607at2759"/>
<dbReference type="PhylomeDB" id="O49286"/>
<dbReference type="PRO" id="PR:O49286"/>
<dbReference type="Proteomes" id="UP000006548">
    <property type="component" value="Chromosome 1"/>
</dbReference>
<dbReference type="ExpressionAtlas" id="O49286">
    <property type="expression patterns" value="baseline and differential"/>
</dbReference>
<dbReference type="GO" id="GO:0010286">
    <property type="term" value="P:heat acclimation"/>
    <property type="evidence" value="ECO:0000270"/>
    <property type="project" value="TAIR"/>
</dbReference>
<dbReference type="GO" id="GO:1901332">
    <property type="term" value="P:negative regulation of lateral root development"/>
    <property type="evidence" value="ECO:0000315"/>
    <property type="project" value="TAIR"/>
</dbReference>
<dbReference type="GO" id="GO:0051603">
    <property type="term" value="P:proteolysis involved in protein catabolic process"/>
    <property type="evidence" value="ECO:0000315"/>
    <property type="project" value="TAIR"/>
</dbReference>
<dbReference type="CDD" id="cd22161">
    <property type="entry name" value="F-box_AtSKP2-like"/>
    <property type="match status" value="1"/>
</dbReference>
<dbReference type="FunFam" id="3.80.10.10:FF:000188">
    <property type="entry name" value="F-box protein SKP2B"/>
    <property type="match status" value="1"/>
</dbReference>
<dbReference type="Gene3D" id="3.80.10.10">
    <property type="entry name" value="Ribonuclease Inhibitor"/>
    <property type="match status" value="1"/>
</dbReference>
<dbReference type="InterPro" id="IPR036047">
    <property type="entry name" value="F-box-like_dom_sf"/>
</dbReference>
<dbReference type="InterPro" id="IPR001810">
    <property type="entry name" value="F-box_dom"/>
</dbReference>
<dbReference type="InterPro" id="IPR001611">
    <property type="entry name" value="Leu-rich_rpt"/>
</dbReference>
<dbReference type="InterPro" id="IPR006553">
    <property type="entry name" value="Leu-rich_rpt_Cys-con_subtyp"/>
</dbReference>
<dbReference type="InterPro" id="IPR032675">
    <property type="entry name" value="LRR_dom_sf"/>
</dbReference>
<dbReference type="PANTHER" id="PTHR13318:SF258">
    <property type="entry name" value="F-BOX PROTEIN SKP2A"/>
    <property type="match status" value="1"/>
</dbReference>
<dbReference type="PANTHER" id="PTHR13318">
    <property type="entry name" value="PARTNER OF PAIRED, ISOFORM B-RELATED"/>
    <property type="match status" value="1"/>
</dbReference>
<dbReference type="Pfam" id="PF00646">
    <property type="entry name" value="F-box"/>
    <property type="match status" value="1"/>
</dbReference>
<dbReference type="Pfam" id="PF13516">
    <property type="entry name" value="LRR_6"/>
    <property type="match status" value="3"/>
</dbReference>
<dbReference type="SMART" id="SM00367">
    <property type="entry name" value="LRR_CC"/>
    <property type="match status" value="9"/>
</dbReference>
<dbReference type="SUPFAM" id="SSF81383">
    <property type="entry name" value="F-box domain"/>
    <property type="match status" value="1"/>
</dbReference>
<dbReference type="SUPFAM" id="SSF52047">
    <property type="entry name" value="RNI-like"/>
    <property type="match status" value="1"/>
</dbReference>
<reference key="1">
    <citation type="journal article" date="2000" name="Nature">
        <title>Sequence and analysis of chromosome 1 of the plant Arabidopsis thaliana.</title>
        <authorList>
            <person name="Theologis A."/>
            <person name="Ecker J.R."/>
            <person name="Palm C.J."/>
            <person name="Federspiel N.A."/>
            <person name="Kaul S."/>
            <person name="White O."/>
            <person name="Alonso J."/>
            <person name="Altafi H."/>
            <person name="Araujo R."/>
            <person name="Bowman C.L."/>
            <person name="Brooks S.Y."/>
            <person name="Buehler E."/>
            <person name="Chan A."/>
            <person name="Chao Q."/>
            <person name="Chen H."/>
            <person name="Cheuk R.F."/>
            <person name="Chin C.W."/>
            <person name="Chung M.K."/>
            <person name="Conn L."/>
            <person name="Conway A.B."/>
            <person name="Conway A.R."/>
            <person name="Creasy T.H."/>
            <person name="Dewar K."/>
            <person name="Dunn P."/>
            <person name="Etgu P."/>
            <person name="Feldblyum T.V."/>
            <person name="Feng J.-D."/>
            <person name="Fong B."/>
            <person name="Fujii C.Y."/>
            <person name="Gill J.E."/>
            <person name="Goldsmith A.D."/>
            <person name="Haas B."/>
            <person name="Hansen N.F."/>
            <person name="Hughes B."/>
            <person name="Huizar L."/>
            <person name="Hunter J.L."/>
            <person name="Jenkins J."/>
            <person name="Johnson-Hopson C."/>
            <person name="Khan S."/>
            <person name="Khaykin E."/>
            <person name="Kim C.J."/>
            <person name="Koo H.L."/>
            <person name="Kremenetskaia I."/>
            <person name="Kurtz D.B."/>
            <person name="Kwan A."/>
            <person name="Lam B."/>
            <person name="Langin-Hooper S."/>
            <person name="Lee A."/>
            <person name="Lee J.M."/>
            <person name="Lenz C.A."/>
            <person name="Li J.H."/>
            <person name="Li Y.-P."/>
            <person name="Lin X."/>
            <person name="Liu S.X."/>
            <person name="Liu Z.A."/>
            <person name="Luros J.S."/>
            <person name="Maiti R."/>
            <person name="Marziali A."/>
            <person name="Militscher J."/>
            <person name="Miranda M."/>
            <person name="Nguyen M."/>
            <person name="Nierman W.C."/>
            <person name="Osborne B.I."/>
            <person name="Pai G."/>
            <person name="Peterson J."/>
            <person name="Pham P.K."/>
            <person name="Rizzo M."/>
            <person name="Rooney T."/>
            <person name="Rowley D."/>
            <person name="Sakano H."/>
            <person name="Salzberg S.L."/>
            <person name="Schwartz J.R."/>
            <person name="Shinn P."/>
            <person name="Southwick A.M."/>
            <person name="Sun H."/>
            <person name="Tallon L.J."/>
            <person name="Tambunga G."/>
            <person name="Toriumi M.J."/>
            <person name="Town C.D."/>
            <person name="Utterback T."/>
            <person name="Van Aken S."/>
            <person name="Vaysberg M."/>
            <person name="Vysotskaia V.S."/>
            <person name="Walker M."/>
            <person name="Wu D."/>
            <person name="Yu G."/>
            <person name="Fraser C.M."/>
            <person name="Venter J.C."/>
            <person name="Davis R.W."/>
        </authorList>
    </citation>
    <scope>NUCLEOTIDE SEQUENCE [LARGE SCALE GENOMIC DNA]</scope>
    <source>
        <strain>cv. Columbia</strain>
    </source>
</reference>
<reference key="2">
    <citation type="journal article" date="2017" name="Plant J.">
        <title>Araport11: a complete reannotation of the Arabidopsis thaliana reference genome.</title>
        <authorList>
            <person name="Cheng C.Y."/>
            <person name="Krishnakumar V."/>
            <person name="Chan A.P."/>
            <person name="Thibaud-Nissen F."/>
            <person name="Schobel S."/>
            <person name="Town C.D."/>
        </authorList>
    </citation>
    <scope>GENOME REANNOTATION</scope>
    <source>
        <strain>cv. Columbia</strain>
    </source>
</reference>
<reference key="3">
    <citation type="submission" date="2006-03" db="EMBL/GenBank/DDBJ databases">
        <title>Arabidopsis ORF clones.</title>
        <authorList>
            <person name="Shinn P."/>
            <person name="Chen H."/>
            <person name="Kim C.J."/>
            <person name="Ecker J.R."/>
        </authorList>
    </citation>
    <scope>NUCLEOTIDE SEQUENCE [LARGE SCALE MRNA]</scope>
    <source>
        <strain>cv. Columbia</strain>
    </source>
</reference>
<reference key="4">
    <citation type="submission" date="2002-03" db="EMBL/GenBank/DDBJ databases">
        <title>Full-length cDNA from Arabidopsis thaliana.</title>
        <authorList>
            <person name="Brover V.V."/>
            <person name="Troukhan M.E."/>
            <person name="Alexandrov N.A."/>
            <person name="Lu Y.-P."/>
            <person name="Flavell R.B."/>
            <person name="Feldmann K.A."/>
        </authorList>
    </citation>
    <scope>NUCLEOTIDE SEQUENCE [LARGE SCALE MRNA]</scope>
</reference>
<reference key="5">
    <citation type="journal article" date="2002" name="Science">
        <title>Functional annotation of a full-length Arabidopsis cDNA collection.</title>
        <authorList>
            <person name="Seki M."/>
            <person name="Narusaka M."/>
            <person name="Kamiya A."/>
            <person name="Ishida J."/>
            <person name="Satou M."/>
            <person name="Sakurai T."/>
            <person name="Nakajima M."/>
            <person name="Enju A."/>
            <person name="Akiyama K."/>
            <person name="Oono Y."/>
            <person name="Muramatsu M."/>
            <person name="Hayashizaki Y."/>
            <person name="Kawai J."/>
            <person name="Carninci P."/>
            <person name="Itoh M."/>
            <person name="Ishii Y."/>
            <person name="Arakawa T."/>
            <person name="Shibata K."/>
            <person name="Shinagawa A."/>
            <person name="Shinozaki K."/>
        </authorList>
    </citation>
    <scope>NUCLEOTIDE SEQUENCE [LARGE SCALE MRNA] OF 192-360</scope>
    <source>
        <strain>cv. Columbia</strain>
    </source>
</reference>
<reference key="6">
    <citation type="submission" date="2004-09" db="EMBL/GenBank/DDBJ databases">
        <title>Large-scale analysis of RIKEN Arabidopsis full-length (RAFL) cDNAs.</title>
        <authorList>
            <person name="Totoki Y."/>
            <person name="Seki M."/>
            <person name="Ishida J."/>
            <person name="Nakajima M."/>
            <person name="Enju A."/>
            <person name="Kamiya A."/>
            <person name="Narusaka M."/>
            <person name="Shin-i T."/>
            <person name="Nakagawa M."/>
            <person name="Sakamoto N."/>
            <person name="Oishi K."/>
            <person name="Kohara Y."/>
            <person name="Kobayashi M."/>
            <person name="Toyoda A."/>
            <person name="Sakaki Y."/>
            <person name="Sakurai T."/>
            <person name="Iida K."/>
            <person name="Akiyama K."/>
            <person name="Satou M."/>
            <person name="Toyoda T."/>
            <person name="Konagaya A."/>
            <person name="Carninci P."/>
            <person name="Kawai J."/>
            <person name="Hayashizaki Y."/>
            <person name="Shinozaki K."/>
        </authorList>
    </citation>
    <scope>NUCLEOTIDE SEQUENCE [LARGE SCALE MRNA] OF 192-360</scope>
    <source>
        <strain>cv. Columbia</strain>
    </source>
</reference>
<reference key="7">
    <citation type="journal article" date="2000" name="Trends Plant Sci.">
        <title>F-box proteins in Arabidopsis.</title>
        <authorList>
            <person name="Xiao W."/>
            <person name="Jang J.-C."/>
        </authorList>
    </citation>
    <scope>GENE FAMILY</scope>
    <scope>NOMENCLATURE</scope>
</reference>
<reference key="8">
    <citation type="journal article" date="2008" name="Plant J.">
        <title>Degradation of the cyclin-dependent kinase inhibitor KRP1 is regulated by two different ubiquitin E3 ligases.</title>
        <authorList>
            <person name="Ren H."/>
            <person name="Santner A."/>
            <person name="del Pozo J.C."/>
            <person name="Murray J.A."/>
            <person name="Estelle M."/>
        </authorList>
    </citation>
    <scope>FUNCTION</scope>
</reference>
<reference key="9">
    <citation type="journal article" date="2010" name="Plant Cell">
        <title>The Arabidopsis cell cycle F-Box protein SKP2A binds to auxin.</title>
        <authorList>
            <person name="Jurado S."/>
            <person name="Abraham Z."/>
            <person name="Manzano C."/>
            <person name="Lopez-Torrejon G."/>
            <person name="Pacios L.F."/>
            <person name="Del Pozo J.C."/>
        </authorList>
    </citation>
    <scope>FUNCTION</scope>
    <scope>MUTAGENESIS OF SER-128</scope>
</reference>
<sequence length="360" mass="39909">MVSEGATRKELNLCFENMKMEGVLISEWKDIPVELLMKILNLVDDRTVIIASCICSGWRDAVSLGLTRLSLSWCKKNMNSLVLSLAPKFVKLQTLVLRQDKPQLEDNAVEAIANHCHELQDLDLSKSSKITDHSLYSLARGCTNLTKLNLSGCTSFSDTALAHLTRFCRKLKILNLCGCVEAVSDNTLQAIGENCNQLQSLNLGWCENISDDGVMSLAYGCPDLRTLDLCSCVLITDESVVALANRCIHLRSLGLYYCRNITDRAMYSLAQSGVKNKHEMWRAVKKGKFDEEGLRSLNISQCTYLTPSAVQAVCDTFPALHTCSGRHSLVMSGCLNLQSVHCACILQAHRTHTVYPHPAH</sequence>
<protein>
    <recommendedName>
        <fullName>F-box protein SKP2B</fullName>
    </recommendedName>
    <alternativeName>
        <fullName>F-box/LRR-repeat protein 5</fullName>
        <shortName>AtFB5</shortName>
    </alternativeName>
    <alternativeName>
        <fullName>SKP2-like protein 2</fullName>
        <shortName>AtSKP2;2</shortName>
    </alternativeName>
</protein>
<name>SKP2B_ARATH</name>